<gene>
    <name evidence="1" type="primary">lpxK</name>
    <name type="ordered locus">amb4093</name>
</gene>
<evidence type="ECO:0000255" key="1">
    <source>
        <dbReference type="HAMAP-Rule" id="MF_00409"/>
    </source>
</evidence>
<comment type="function">
    <text evidence="1">Transfers the gamma-phosphate of ATP to the 4'-position of a tetraacyldisaccharide 1-phosphate intermediate (termed DS-1-P) to form tetraacyldisaccharide 1,4'-bis-phosphate (lipid IVA).</text>
</comment>
<comment type="catalytic activity">
    <reaction evidence="1">
        <text>a lipid A disaccharide + ATP = a lipid IVA + ADP + H(+)</text>
        <dbReference type="Rhea" id="RHEA:67840"/>
        <dbReference type="ChEBI" id="CHEBI:15378"/>
        <dbReference type="ChEBI" id="CHEBI:30616"/>
        <dbReference type="ChEBI" id="CHEBI:176343"/>
        <dbReference type="ChEBI" id="CHEBI:176425"/>
        <dbReference type="ChEBI" id="CHEBI:456216"/>
        <dbReference type="EC" id="2.7.1.130"/>
    </reaction>
</comment>
<comment type="pathway">
    <text evidence="1">Glycolipid biosynthesis; lipid IV(A) biosynthesis; lipid IV(A) from (3R)-3-hydroxytetradecanoyl-[acyl-carrier-protein] and UDP-N-acetyl-alpha-D-glucosamine: step 6/6.</text>
</comment>
<comment type="similarity">
    <text evidence="1">Belongs to the LpxK family.</text>
</comment>
<feature type="chain" id="PRO_0000291213" description="Tetraacyldisaccharide 4'-kinase">
    <location>
        <begin position="1"/>
        <end position="325"/>
    </location>
</feature>
<feature type="binding site" evidence="1">
    <location>
        <begin position="51"/>
        <end position="58"/>
    </location>
    <ligand>
        <name>ATP</name>
        <dbReference type="ChEBI" id="CHEBI:30616"/>
    </ligand>
</feature>
<protein>
    <recommendedName>
        <fullName evidence="1">Tetraacyldisaccharide 4'-kinase</fullName>
        <ecNumber evidence="1">2.7.1.130</ecNumber>
    </recommendedName>
    <alternativeName>
        <fullName evidence="1">Lipid A 4'-kinase</fullName>
    </alternativeName>
</protein>
<reference key="1">
    <citation type="journal article" date="2005" name="DNA Res.">
        <title>Complete genome sequence of the facultative anaerobic magnetotactic bacterium Magnetospirillum sp. strain AMB-1.</title>
        <authorList>
            <person name="Matsunaga T."/>
            <person name="Okamura Y."/>
            <person name="Fukuda Y."/>
            <person name="Wahyudi A.T."/>
            <person name="Murase Y."/>
            <person name="Takeyama H."/>
        </authorList>
    </citation>
    <scope>NUCLEOTIDE SEQUENCE [LARGE SCALE GENOMIC DNA]</scope>
    <source>
        <strain>ATCC 700264 / AMB-1</strain>
    </source>
</reference>
<proteinExistence type="inferred from homology"/>
<dbReference type="EC" id="2.7.1.130" evidence="1"/>
<dbReference type="EMBL" id="AP007255">
    <property type="protein sequence ID" value="BAE52897.1"/>
    <property type="molecule type" value="Genomic_DNA"/>
</dbReference>
<dbReference type="RefSeq" id="WP_011386443.1">
    <property type="nucleotide sequence ID" value="NC_007626.1"/>
</dbReference>
<dbReference type="SMR" id="Q2VZS8"/>
<dbReference type="STRING" id="342108.amb4093"/>
<dbReference type="KEGG" id="mag:amb4093"/>
<dbReference type="HOGENOM" id="CLU_038816_0_0_5"/>
<dbReference type="OrthoDB" id="9766423at2"/>
<dbReference type="UniPathway" id="UPA00359">
    <property type="reaction ID" value="UER00482"/>
</dbReference>
<dbReference type="Proteomes" id="UP000007058">
    <property type="component" value="Chromosome"/>
</dbReference>
<dbReference type="GO" id="GO:0005886">
    <property type="term" value="C:plasma membrane"/>
    <property type="evidence" value="ECO:0007669"/>
    <property type="project" value="TreeGrafter"/>
</dbReference>
<dbReference type="GO" id="GO:0005524">
    <property type="term" value="F:ATP binding"/>
    <property type="evidence" value="ECO:0007669"/>
    <property type="project" value="UniProtKB-UniRule"/>
</dbReference>
<dbReference type="GO" id="GO:0009029">
    <property type="term" value="F:tetraacyldisaccharide 4'-kinase activity"/>
    <property type="evidence" value="ECO:0007669"/>
    <property type="project" value="UniProtKB-UniRule"/>
</dbReference>
<dbReference type="GO" id="GO:0009245">
    <property type="term" value="P:lipid A biosynthetic process"/>
    <property type="evidence" value="ECO:0007669"/>
    <property type="project" value="UniProtKB-UniRule"/>
</dbReference>
<dbReference type="GO" id="GO:0009244">
    <property type="term" value="P:lipopolysaccharide core region biosynthetic process"/>
    <property type="evidence" value="ECO:0007669"/>
    <property type="project" value="TreeGrafter"/>
</dbReference>
<dbReference type="HAMAP" id="MF_00409">
    <property type="entry name" value="LpxK"/>
    <property type="match status" value="1"/>
</dbReference>
<dbReference type="InterPro" id="IPR003758">
    <property type="entry name" value="LpxK"/>
</dbReference>
<dbReference type="InterPro" id="IPR027417">
    <property type="entry name" value="P-loop_NTPase"/>
</dbReference>
<dbReference type="NCBIfam" id="TIGR00682">
    <property type="entry name" value="lpxK"/>
    <property type="match status" value="1"/>
</dbReference>
<dbReference type="PANTHER" id="PTHR42724">
    <property type="entry name" value="TETRAACYLDISACCHARIDE 4'-KINASE"/>
    <property type="match status" value="1"/>
</dbReference>
<dbReference type="PANTHER" id="PTHR42724:SF1">
    <property type="entry name" value="TETRAACYLDISACCHARIDE 4'-KINASE, MITOCHONDRIAL-RELATED"/>
    <property type="match status" value="1"/>
</dbReference>
<dbReference type="Pfam" id="PF02606">
    <property type="entry name" value="LpxK"/>
    <property type="match status" value="1"/>
</dbReference>
<dbReference type="SUPFAM" id="SSF52540">
    <property type="entry name" value="P-loop containing nucleoside triphosphate hydrolases"/>
    <property type="match status" value="1"/>
</dbReference>
<name>LPXK_PARM1</name>
<sequence length="325" mass="34806">MRAPDFWRKDNAVSRLLAPLGAIYGWAVRRNLERAEEYRPAVPVICVGNIVVGGAGKTPVGIALARRLIAAGVKPHFLTRGYGGTEVGPRAVDLDRHDFARVGDEALLLAREAPTWVSRWRPDGAVAATEMGAEVIIMDDGFQNGSIAKDLSLVVVDGSYGFGNGRTMPAGPCREPPDQGLARADAMVVIGKDRRGLAELARAHGIPLLAARLVPGPEGADLKGRKVVAFAGIGRPEKFFASLKQCGARLTADHSFPDHHPFTRADIEALLAEAEANEALLITTAKDRVRLPADLRARVAVLSVSLDWDAPSLLTPLFDRIGVRA</sequence>
<accession>Q2VZS8</accession>
<organism>
    <name type="scientific">Paramagnetospirillum magneticum (strain ATCC 700264 / AMB-1)</name>
    <name type="common">Magnetospirillum magneticum</name>
    <dbReference type="NCBI Taxonomy" id="342108"/>
    <lineage>
        <taxon>Bacteria</taxon>
        <taxon>Pseudomonadati</taxon>
        <taxon>Pseudomonadota</taxon>
        <taxon>Alphaproteobacteria</taxon>
        <taxon>Rhodospirillales</taxon>
        <taxon>Magnetospirillaceae</taxon>
        <taxon>Paramagnetospirillum</taxon>
    </lineage>
</organism>
<keyword id="KW-0067">ATP-binding</keyword>
<keyword id="KW-0418">Kinase</keyword>
<keyword id="KW-0441">Lipid A biosynthesis</keyword>
<keyword id="KW-0444">Lipid biosynthesis</keyword>
<keyword id="KW-0443">Lipid metabolism</keyword>
<keyword id="KW-0547">Nucleotide-binding</keyword>
<keyword id="KW-0808">Transferase</keyword>